<sequence>MPIKPLVILPDPILREISKPVEHIDSTIQQLADDMLETMYNAGGIGLAAIQVGIPLRMLVVDVSIFTSIFEPDAPQDPIIVINPEILWLSDERNICMEGCLSIPGYSAEVERPKRLCIRYRNREGEQKEIEADNILATCLQHEIDHLNGCLFIDHLSKVKRNMVIRKFEKRAKENNLEKEIL</sequence>
<protein>
    <recommendedName>
        <fullName evidence="1">Peptide deformylase</fullName>
        <shortName evidence="1">PDF</shortName>
        <ecNumber evidence="1">3.5.1.88</ecNumber>
    </recommendedName>
    <alternativeName>
        <fullName evidence="1">Polypeptide deformylase</fullName>
    </alternativeName>
</protein>
<feature type="chain" id="PRO_0000301006" description="Peptide deformylase">
    <location>
        <begin position="1"/>
        <end position="182"/>
    </location>
</feature>
<feature type="active site" evidence="1">
    <location>
        <position position="143"/>
    </location>
</feature>
<feature type="binding site" evidence="1">
    <location>
        <position position="100"/>
    </location>
    <ligand>
        <name>Fe cation</name>
        <dbReference type="ChEBI" id="CHEBI:24875"/>
    </ligand>
</feature>
<feature type="binding site" evidence="1">
    <location>
        <position position="142"/>
    </location>
    <ligand>
        <name>Fe cation</name>
        <dbReference type="ChEBI" id="CHEBI:24875"/>
    </ligand>
</feature>
<feature type="binding site" evidence="1">
    <location>
        <position position="146"/>
    </location>
    <ligand>
        <name>Fe cation</name>
        <dbReference type="ChEBI" id="CHEBI:24875"/>
    </ligand>
</feature>
<accession>A1UUB4</accession>
<keyword id="KW-0378">Hydrolase</keyword>
<keyword id="KW-0408">Iron</keyword>
<keyword id="KW-0479">Metal-binding</keyword>
<keyword id="KW-0648">Protein biosynthesis</keyword>
<reference key="1">
    <citation type="submission" date="2006-12" db="EMBL/GenBank/DDBJ databases">
        <authorList>
            <person name="Hendrix L."/>
            <person name="Mohamoud Y."/>
            <person name="Radune D."/>
            <person name="Shvartsbeyn A."/>
            <person name="Daugherty S."/>
            <person name="Dodson R."/>
            <person name="Durkin A.S."/>
            <person name="Harkins D."/>
            <person name="Huot H."/>
            <person name="Kothari S.P."/>
            <person name="Madupu R."/>
            <person name="Li J."/>
            <person name="Nelson W.C."/>
            <person name="Shrivastava S."/>
            <person name="Giglio M.G."/>
            <person name="Haft D."/>
            <person name="Selengut J."/>
            <person name="Fraser-Ligget C."/>
            <person name="Seshadri R."/>
        </authorList>
    </citation>
    <scope>NUCLEOTIDE SEQUENCE [LARGE SCALE GENOMIC DNA]</scope>
    <source>
        <strain>ATCC 35685 / KC583 / Herrer 020/F12,63</strain>
    </source>
</reference>
<dbReference type="EC" id="3.5.1.88" evidence="1"/>
<dbReference type="EMBL" id="CP000524">
    <property type="protein sequence ID" value="ABM44951.1"/>
    <property type="molecule type" value="Genomic_DNA"/>
</dbReference>
<dbReference type="RefSeq" id="WP_005768105.1">
    <property type="nucleotide sequence ID" value="NC_008783.1"/>
</dbReference>
<dbReference type="SMR" id="A1UUB4"/>
<dbReference type="STRING" id="360095.BARBAKC583_1319"/>
<dbReference type="GeneID" id="4684713"/>
<dbReference type="KEGG" id="bbk:BARBAKC583_1319"/>
<dbReference type="PATRIC" id="fig|360095.6.peg.1291"/>
<dbReference type="eggNOG" id="COG0242">
    <property type="taxonomic scope" value="Bacteria"/>
</dbReference>
<dbReference type="HOGENOM" id="CLU_061901_2_0_5"/>
<dbReference type="OrthoDB" id="9804313at2"/>
<dbReference type="Proteomes" id="UP000000643">
    <property type="component" value="Chromosome"/>
</dbReference>
<dbReference type="GO" id="GO:0046872">
    <property type="term" value="F:metal ion binding"/>
    <property type="evidence" value="ECO:0007669"/>
    <property type="project" value="UniProtKB-KW"/>
</dbReference>
<dbReference type="GO" id="GO:0042586">
    <property type="term" value="F:peptide deformylase activity"/>
    <property type="evidence" value="ECO:0007669"/>
    <property type="project" value="UniProtKB-UniRule"/>
</dbReference>
<dbReference type="GO" id="GO:0043686">
    <property type="term" value="P:co-translational protein modification"/>
    <property type="evidence" value="ECO:0007669"/>
    <property type="project" value="TreeGrafter"/>
</dbReference>
<dbReference type="GO" id="GO:0006412">
    <property type="term" value="P:translation"/>
    <property type="evidence" value="ECO:0007669"/>
    <property type="project" value="UniProtKB-UniRule"/>
</dbReference>
<dbReference type="CDD" id="cd00487">
    <property type="entry name" value="Pep_deformylase"/>
    <property type="match status" value="1"/>
</dbReference>
<dbReference type="Gene3D" id="3.90.45.10">
    <property type="entry name" value="Peptide deformylase"/>
    <property type="match status" value="1"/>
</dbReference>
<dbReference type="HAMAP" id="MF_00163">
    <property type="entry name" value="Pep_deformylase"/>
    <property type="match status" value="1"/>
</dbReference>
<dbReference type="InterPro" id="IPR023635">
    <property type="entry name" value="Peptide_deformylase"/>
</dbReference>
<dbReference type="InterPro" id="IPR036821">
    <property type="entry name" value="Peptide_deformylase_sf"/>
</dbReference>
<dbReference type="NCBIfam" id="TIGR00079">
    <property type="entry name" value="pept_deformyl"/>
    <property type="match status" value="1"/>
</dbReference>
<dbReference type="NCBIfam" id="NF001159">
    <property type="entry name" value="PRK00150.1-3"/>
    <property type="match status" value="1"/>
</dbReference>
<dbReference type="PANTHER" id="PTHR10458">
    <property type="entry name" value="PEPTIDE DEFORMYLASE"/>
    <property type="match status" value="1"/>
</dbReference>
<dbReference type="PANTHER" id="PTHR10458:SF22">
    <property type="entry name" value="PEPTIDE DEFORMYLASE"/>
    <property type="match status" value="1"/>
</dbReference>
<dbReference type="Pfam" id="PF01327">
    <property type="entry name" value="Pep_deformylase"/>
    <property type="match status" value="1"/>
</dbReference>
<dbReference type="PIRSF" id="PIRSF004749">
    <property type="entry name" value="Pep_def"/>
    <property type="match status" value="1"/>
</dbReference>
<dbReference type="PRINTS" id="PR01576">
    <property type="entry name" value="PDEFORMYLASE"/>
</dbReference>
<dbReference type="SUPFAM" id="SSF56420">
    <property type="entry name" value="Peptide deformylase"/>
    <property type="match status" value="1"/>
</dbReference>
<proteinExistence type="inferred from homology"/>
<evidence type="ECO:0000255" key="1">
    <source>
        <dbReference type="HAMAP-Rule" id="MF_00163"/>
    </source>
</evidence>
<organism>
    <name type="scientific">Bartonella bacilliformis (strain ATCC 35685 / KC583 / Herrer 020/F12,63)</name>
    <dbReference type="NCBI Taxonomy" id="360095"/>
    <lineage>
        <taxon>Bacteria</taxon>
        <taxon>Pseudomonadati</taxon>
        <taxon>Pseudomonadota</taxon>
        <taxon>Alphaproteobacteria</taxon>
        <taxon>Hyphomicrobiales</taxon>
        <taxon>Bartonellaceae</taxon>
        <taxon>Bartonella</taxon>
    </lineage>
</organism>
<comment type="function">
    <text evidence="1">Removes the formyl group from the N-terminal Met of newly synthesized proteins. Requires at least a dipeptide for an efficient rate of reaction. N-terminal L-methionine is a prerequisite for activity but the enzyme has broad specificity at other positions.</text>
</comment>
<comment type="catalytic activity">
    <reaction evidence="1">
        <text>N-terminal N-formyl-L-methionyl-[peptide] + H2O = N-terminal L-methionyl-[peptide] + formate</text>
        <dbReference type="Rhea" id="RHEA:24420"/>
        <dbReference type="Rhea" id="RHEA-COMP:10639"/>
        <dbReference type="Rhea" id="RHEA-COMP:10640"/>
        <dbReference type="ChEBI" id="CHEBI:15377"/>
        <dbReference type="ChEBI" id="CHEBI:15740"/>
        <dbReference type="ChEBI" id="CHEBI:49298"/>
        <dbReference type="ChEBI" id="CHEBI:64731"/>
        <dbReference type="EC" id="3.5.1.88"/>
    </reaction>
</comment>
<comment type="cofactor">
    <cofactor evidence="1">
        <name>Fe(2+)</name>
        <dbReference type="ChEBI" id="CHEBI:29033"/>
    </cofactor>
    <text evidence="1">Binds 1 Fe(2+) ion.</text>
</comment>
<comment type="similarity">
    <text evidence="1">Belongs to the polypeptide deformylase family.</text>
</comment>
<name>DEF_BARBK</name>
<gene>
    <name evidence="1" type="primary">def</name>
    <name type="ordered locus">BARBAKC583_1319</name>
</gene>